<keyword id="KW-1003">Cell membrane</keyword>
<keyword id="KW-0408">Iron</keyword>
<keyword id="KW-0472">Membrane</keyword>
<keyword id="KW-0812">Transmembrane</keyword>
<keyword id="KW-1133">Transmembrane helix</keyword>
<keyword id="KW-0813">Transport</keyword>
<evidence type="ECO:0000250" key="1"/>
<evidence type="ECO:0000255" key="2"/>
<evidence type="ECO:0000269" key="3">
    <source>
    </source>
</evidence>
<evidence type="ECO:0000305" key="4"/>
<organism>
    <name type="scientific">Staphylococcus aureus (strain MW2)</name>
    <dbReference type="NCBI Taxonomy" id="196620"/>
    <lineage>
        <taxon>Bacteria</taxon>
        <taxon>Bacillati</taxon>
        <taxon>Bacillota</taxon>
        <taxon>Bacilli</taxon>
        <taxon>Bacillales</taxon>
        <taxon>Staphylococcaceae</taxon>
        <taxon>Staphylococcus</taxon>
    </lineage>
</organism>
<protein>
    <recommendedName>
        <fullName>Probable heme-iron transport system permease protein IsdF</fullName>
    </recommendedName>
    <alternativeName>
        <fullName>Iron-regulated surface determinant protein F</fullName>
    </alternativeName>
    <alternativeName>
        <fullName>Staphylococcal iron-regulated protein G</fullName>
    </alternativeName>
</protein>
<reference key="1">
    <citation type="journal article" date="2002" name="Lancet">
        <title>Genome and virulence determinants of high virulence community-acquired MRSA.</title>
        <authorList>
            <person name="Baba T."/>
            <person name="Takeuchi F."/>
            <person name="Kuroda M."/>
            <person name="Yuzawa H."/>
            <person name="Aoki K."/>
            <person name="Oguchi A."/>
            <person name="Nagai Y."/>
            <person name="Iwama N."/>
            <person name="Asano K."/>
            <person name="Naimi T."/>
            <person name="Kuroda H."/>
            <person name="Cui L."/>
            <person name="Yamamoto K."/>
            <person name="Hiramatsu K."/>
        </authorList>
    </citation>
    <scope>NUCLEOTIDE SEQUENCE [LARGE SCALE GENOMIC DNA]</scope>
    <source>
        <strain>MW2</strain>
    </source>
</reference>
<reference key="2">
    <citation type="journal article" date="2008" name="J. Immunol.">
        <title>Neutrophil microbicides induce a pathogen survival response in community-associated methicillin-resistant Staphylococcus aureus.</title>
        <authorList>
            <person name="Palazzolo-Ballance A.M."/>
            <person name="Reniere M.L."/>
            <person name="Braughton K.R."/>
            <person name="Sturdevant D.E."/>
            <person name="Otto M."/>
            <person name="Kreiswirth B.N."/>
            <person name="Skaar E.P."/>
            <person name="DeLeo F.R."/>
        </authorList>
    </citation>
    <scope>INDUCTION BY HYDROGEN PEROXIDE AND HYPOCHLOROUS ACID</scope>
</reference>
<sequence length="322" mass="35168">MMIKNKKKLLFLCLLVILIATAYISFVTGTIKLSFNDLITKFTTGNNEAVDSIIDLRLPRILIALMVGAMLAVSGALLQAALQNPLAEANIIGVSSGALIMRALCMLFIPQLYFYLPLLSFIGGLIPFLIIILLHSKFRFNAVSMILVGVALFVLLNGVLEILTQNPLMKIPQGLTMKIWSDVYILAVSALLGLILTLLLSPKLNLLNLDDIQARSIGFNIDRYRWLTGLLAVFLASATVAIVGQLAFLGIIVPHVVRKLVGGNYRVLIPFSTVIGAWLLLVADLLGRVIQPPLEIPANAILMIVGGPMLIYLICQSQRNRI</sequence>
<gene>
    <name type="primary">isdF</name>
    <name type="synonym">sirG</name>
    <name type="ordered locus">MW1016</name>
</gene>
<dbReference type="EMBL" id="BA000033">
    <property type="protein sequence ID" value="BAB94881.1"/>
    <property type="status" value="ALT_INIT"/>
    <property type="molecule type" value="Genomic_DNA"/>
</dbReference>
<dbReference type="SMR" id="Q8NX64"/>
<dbReference type="KEGG" id="sam:MW1016"/>
<dbReference type="HOGENOM" id="CLU_013016_1_1_9"/>
<dbReference type="GO" id="GO:0005886">
    <property type="term" value="C:plasma membrane"/>
    <property type="evidence" value="ECO:0007669"/>
    <property type="project" value="UniProtKB-SubCell"/>
</dbReference>
<dbReference type="GO" id="GO:0022857">
    <property type="term" value="F:transmembrane transporter activity"/>
    <property type="evidence" value="ECO:0007669"/>
    <property type="project" value="InterPro"/>
</dbReference>
<dbReference type="GO" id="GO:0033214">
    <property type="term" value="P:siderophore-dependent iron import into cell"/>
    <property type="evidence" value="ECO:0007669"/>
    <property type="project" value="TreeGrafter"/>
</dbReference>
<dbReference type="CDD" id="cd06550">
    <property type="entry name" value="TM_ABC_iron-siderophores_like"/>
    <property type="match status" value="1"/>
</dbReference>
<dbReference type="FunFam" id="1.10.3470.10:FF:000001">
    <property type="entry name" value="Vitamin B12 ABC transporter permease BtuC"/>
    <property type="match status" value="1"/>
</dbReference>
<dbReference type="Gene3D" id="1.10.3470.10">
    <property type="entry name" value="ABC transporter involved in vitamin B12 uptake, BtuC"/>
    <property type="match status" value="1"/>
</dbReference>
<dbReference type="InterPro" id="IPR037294">
    <property type="entry name" value="ABC_BtuC-like"/>
</dbReference>
<dbReference type="InterPro" id="IPR000522">
    <property type="entry name" value="ABC_transptr_permease_BtuC"/>
</dbReference>
<dbReference type="PANTHER" id="PTHR30472">
    <property type="entry name" value="FERRIC ENTEROBACTIN TRANSPORT SYSTEM PERMEASE PROTEIN"/>
    <property type="match status" value="1"/>
</dbReference>
<dbReference type="PANTHER" id="PTHR30472:SF21">
    <property type="entry name" value="HEME-IRON TRANSPORT SYSTEM PERMEASE PROTEIN ISDF-RELATED"/>
    <property type="match status" value="1"/>
</dbReference>
<dbReference type="Pfam" id="PF01032">
    <property type="entry name" value="FecCD"/>
    <property type="match status" value="1"/>
</dbReference>
<dbReference type="SUPFAM" id="SSF81345">
    <property type="entry name" value="ABC transporter involved in vitamin B12 uptake, BtuC"/>
    <property type="match status" value="1"/>
</dbReference>
<feature type="chain" id="PRO_0000372468" description="Probable heme-iron transport system permease protein IsdF">
    <location>
        <begin position="1"/>
        <end position="322"/>
    </location>
</feature>
<feature type="transmembrane region" description="Helical" evidence="2">
    <location>
        <begin position="9"/>
        <end position="29"/>
    </location>
</feature>
<feature type="transmembrane region" description="Helical" evidence="2">
    <location>
        <begin position="61"/>
        <end position="81"/>
    </location>
</feature>
<feature type="transmembrane region" description="Helical" evidence="2">
    <location>
        <begin position="89"/>
        <end position="109"/>
    </location>
</feature>
<feature type="transmembrane region" description="Helical" evidence="2">
    <location>
        <begin position="114"/>
        <end position="134"/>
    </location>
</feature>
<feature type="transmembrane region" description="Helical" evidence="2">
    <location>
        <begin position="143"/>
        <end position="163"/>
    </location>
</feature>
<feature type="transmembrane region" description="Helical" evidence="2">
    <location>
        <begin position="179"/>
        <end position="199"/>
    </location>
</feature>
<feature type="transmembrane region" description="Helical" evidence="2">
    <location>
        <begin position="233"/>
        <end position="253"/>
    </location>
</feature>
<feature type="transmembrane region" description="Helical" evidence="2">
    <location>
        <begin position="267"/>
        <end position="287"/>
    </location>
</feature>
<feature type="transmembrane region" description="Helical" evidence="2">
    <location>
        <begin position="294"/>
        <end position="314"/>
    </location>
</feature>
<comment type="function">
    <text evidence="1">Part of the binding-protein-dependent transport system for heme-iron. Responsible for the translocation of the substrate across the membrane (By similarity).</text>
</comment>
<comment type="subcellular location">
    <subcellularLocation>
        <location evidence="4">Cell membrane</location>
        <topology evidence="4">Multi-pass membrane protein</topology>
    </subcellularLocation>
</comment>
<comment type="induction">
    <text evidence="1 3">Repressed by fur in the presence of iron (By similarity). Up-regulated by hydrogen peroxide and to a lesser extent by hypochlorous acid.</text>
</comment>
<comment type="similarity">
    <text evidence="4">Belongs to the binding-protein-dependent transport system permease family. FecCD subfamily.</text>
</comment>
<comment type="sequence caution" evidence="4">
    <conflict type="erroneous initiation">
        <sequence resource="EMBL-CDS" id="BAB94881"/>
    </conflict>
</comment>
<name>ISDF_STAAW</name>
<accession>Q8NX64</accession>
<proteinExistence type="evidence at transcript level"/>